<gene>
    <name evidence="3" type="primary">cnsK</name>
    <name type="ORF">PEX2_055450</name>
</gene>
<protein>
    <recommendedName>
        <fullName evidence="3">Communesin N16 acyltransferase cnsK</fullName>
        <ecNumber evidence="1">2.3.1.-</ecNumber>
    </recommendedName>
    <alternativeName>
        <fullName evidence="3">Communesin biosynthesis cluster protein K</fullName>
    </alternativeName>
</protein>
<feature type="chain" id="PRO_0000446466" description="Communesin N16 acyltransferase cnsK">
    <location>
        <begin position="1"/>
        <end position="466"/>
    </location>
</feature>
<comment type="function">
    <text evidence="1 2">Communesin N16 acyltransferase; part of the gene cluster that mediates the biosynthesis of communesins, a prominent class of indole alkaloids with great potential as pharmaceuticals (PubMed:25571861). Communesins are biosynthesized by the coupling of tryptamine and aurantioclavine, two building blocks derived from L-tryptophan (PubMed:25571861). The L-tryptophan decarboxylase cnsB converts L-tryptophan to tryptamine, whereas the tryptophan dimethylallyltransferase cnsF converts L-tryptophan to 4-dimethylallyl tryptophan which is further transformed to aurantioclavine by the aurantioclavine synthase cnsA, probably aided by the catalase cnsD (PubMed:25571861). The cytochrome P450 monooxygenase cnsC catalyzes the heterodimeric coupling between the two different indole moieties, tryptamine and aurantioclavine, to construct vicinal quaternary stereocenters and yield the heptacyclic communesin scaffold (PubMed:26963294). The O-methyltransferase cnsE then methylates the communesin scaffold to produce communesin K, the simplest characterized communesin that contains the heptacyclic core (PubMed:25571861). The dioxygenase cnsJ converts communesin K into communesin I (PubMed:25571861). Acylation to introduce the hexadienyl group at position N16 of communesin I by the acyltransferase cnsK leads to the production of communesin B. The hexadienyl group is produced by the highly reducing polyketide synthase cnsI, before being hydrolytically removed from cnsI by the serine hydrolase cnsH, converted into hexadienyl-CoA by the CoA ligase cnsG, and then transferred to communesin I by cnsK (PubMed:25571861). Surprisingly, cnsK may also be a promiscuous acyltransferase that can tolerate a range of acyl groups, including acetyl-, propionyl-, and butyryl-CoA, which lead to communesins A, G and H respectively (PubMed:25571861). The roles of the alpha-ketoglutarate-dependent dioxygenases cnsM and cnsP have still to be determined (PubMed:25571861).</text>
</comment>
<comment type="pathway">
    <text evidence="1">Alkaloid biosynthesis.</text>
</comment>
<comment type="disruption phenotype">
    <text evidence="1">Abolishes the biosynthesis of communesins A and B and leads to the accumulation of communesin I, a non-acylated version of communesins A and B.</text>
</comment>
<comment type="similarity">
    <text evidence="4">Belongs to the fumigaclavine B O-acetyltransferase family.</text>
</comment>
<name>CNSK_PENEN</name>
<evidence type="ECO:0000269" key="1">
    <source>
    </source>
</evidence>
<evidence type="ECO:0000269" key="2">
    <source>
    </source>
</evidence>
<evidence type="ECO:0000303" key="3">
    <source>
    </source>
</evidence>
<evidence type="ECO:0000305" key="4"/>
<reference key="1">
    <citation type="journal article" date="2015" name="Mol. Plant Microbe Interact.">
        <title>Genome, transcriptome, and functional analyses of Penicillium expansum provide new insights into secondary metabolism and pathogenicity.</title>
        <authorList>
            <person name="Ballester A.R."/>
            <person name="Marcet-Houben M."/>
            <person name="Levin E."/>
            <person name="Sela N."/>
            <person name="Selma-Lazaro C."/>
            <person name="Carmona L."/>
            <person name="Wisniewski M."/>
            <person name="Droby S."/>
            <person name="Gonzalez-Candelas L."/>
            <person name="Gabaldon T."/>
        </authorList>
    </citation>
    <scope>NUCLEOTIDE SEQUENCE [LARGE SCALE GENOMIC DNA]</scope>
    <source>
        <strain>MD-8</strain>
    </source>
</reference>
<reference key="2">
    <citation type="journal article" date="2015" name="Angew. Chem. Int. Ed.">
        <title>Elucidation of the concise biosynthetic pathway of the communesin indole alkaloids.</title>
        <authorList>
            <person name="Lin H.C."/>
            <person name="Chiou G."/>
            <person name="Chooi Y.H."/>
            <person name="McMahon T.C."/>
            <person name="Xu W."/>
            <person name="Garg N.K."/>
            <person name="Tang Y."/>
        </authorList>
    </citation>
    <scope>IDENTIFICATION</scope>
    <scope>FUNCTION</scope>
    <scope>DISRUPTION PHENOTYPE</scope>
    <scope>CATALYTIC ACTIVITY</scope>
    <scope>PATHWAY</scope>
</reference>
<reference key="3">
    <citation type="journal article" date="2016" name="J. Am. Chem. Soc.">
        <title>P450-mediated coupling of indole fragments to forge communesin and unnatural isomers.</title>
        <authorList>
            <person name="Lin H.C."/>
            <person name="McMahon T.C."/>
            <person name="Patel A."/>
            <person name="Corsello M."/>
            <person name="Simon A."/>
            <person name="Xu W."/>
            <person name="Zhao M."/>
            <person name="Houk K.N."/>
            <person name="Garg N.K."/>
            <person name="Tang Y."/>
        </authorList>
    </citation>
    <scope>FUNCTION</scope>
</reference>
<organism>
    <name type="scientific">Penicillium expansum</name>
    <name type="common">Blue mold rot fungus</name>
    <dbReference type="NCBI Taxonomy" id="27334"/>
    <lineage>
        <taxon>Eukaryota</taxon>
        <taxon>Fungi</taxon>
        <taxon>Dikarya</taxon>
        <taxon>Ascomycota</taxon>
        <taxon>Pezizomycotina</taxon>
        <taxon>Eurotiomycetes</taxon>
        <taxon>Eurotiomycetidae</taxon>
        <taxon>Eurotiales</taxon>
        <taxon>Aspergillaceae</taxon>
        <taxon>Penicillium</taxon>
    </lineage>
</organism>
<accession>A0A0A2JWD5</accession>
<sequence length="466" mass="51273">MERSLSFEPYLLTPLDHIIKDFYVSSFISFPLHDPTTAVSALKDGVERLTRALPFLSGARVPSSKLPGKRNVMEIHPSPESLEWIPMLQIKHYRDTTLVATCSPGPTGCSDLDDSWCALPIIIPADRPSPVARFRASVFPDGILLCMTLNHAVFDGSGLGTVLKMLATCCCANSAMDHPVSLPTTYAKEASSRQIILESAAPSSGSDSEAYDRIFKSNDIIPGLDKGITSRRFSFPASKIRALKDACNAAKPTDQDPAISRNDVLTALLTICMTRARQTEQTKNLTTQLAVPVNLRRKFHPSLPDSYLGNTIIPLVVDIDPPTVPSSRCGTSPMHAHLNELTNLSLRIRKELKLLDEKDYTGGLVSYLREQSDWGATSMKFTDITVSSLRHLDINGLDFGPEIGRANSFDVQSGMYPGICDIMPTCGRDRVEDINDVPWDVCVTLEDSAWSAFMEDDLVLWALEKI</sequence>
<keyword id="KW-0012">Acyltransferase</keyword>
<keyword id="KW-1185">Reference proteome</keyword>
<keyword id="KW-0808">Transferase</keyword>
<proteinExistence type="evidence at protein level"/>
<dbReference type="EC" id="2.3.1.-" evidence="1"/>
<dbReference type="EMBL" id="JQFZ01000090">
    <property type="protein sequence ID" value="KGO59704.1"/>
    <property type="molecule type" value="Genomic_DNA"/>
</dbReference>
<dbReference type="RefSeq" id="XP_016600817.1">
    <property type="nucleotide sequence ID" value="XM_016742819.1"/>
</dbReference>
<dbReference type="SMR" id="A0A0A2JWD5"/>
<dbReference type="STRING" id="27334.A0A0A2JWD5"/>
<dbReference type="GeneID" id="27678238"/>
<dbReference type="VEuPathDB" id="FungiDB:PEXP_030560"/>
<dbReference type="HOGENOM" id="CLU_026450_1_1_1"/>
<dbReference type="OrthoDB" id="1862401at2759"/>
<dbReference type="PhylomeDB" id="A0A0A2JWD5"/>
<dbReference type="Proteomes" id="UP000030143">
    <property type="component" value="Unassembled WGS sequence"/>
</dbReference>
<dbReference type="GO" id="GO:0016746">
    <property type="term" value="F:acyltransferase activity"/>
    <property type="evidence" value="ECO:0007669"/>
    <property type="project" value="UniProtKB-KW"/>
</dbReference>
<dbReference type="Gene3D" id="3.30.559.10">
    <property type="entry name" value="Chloramphenicol acetyltransferase-like domain"/>
    <property type="match status" value="2"/>
</dbReference>
<dbReference type="InterPro" id="IPR023213">
    <property type="entry name" value="CAT-like_dom_sf"/>
</dbReference>
<dbReference type="InterPro" id="IPR051283">
    <property type="entry name" value="Sec_Metabolite_Acyltrans"/>
</dbReference>
<dbReference type="PANTHER" id="PTHR31896">
    <property type="entry name" value="FAMILY REGULATORY PROTEIN, PUTATIVE (AFU_ORTHOLOGUE AFUA_3G14730)-RELATED"/>
    <property type="match status" value="1"/>
</dbReference>
<dbReference type="PANTHER" id="PTHR31896:SF64">
    <property type="entry name" value="TRICHOTHECENE 3-O-ACETYLTRANSFERASE"/>
    <property type="match status" value="1"/>
</dbReference>
<dbReference type="Pfam" id="PF02458">
    <property type="entry name" value="Transferase"/>
    <property type="match status" value="1"/>
</dbReference>